<accession>Q5GRZ4</accession>
<sequence length="203" mass="22274">MAYPDFTLENKLSGVIAGVDEVGRGPLAGPVMSAAVVFTNRNIIIEGINDSKKLTAKNRQVLYEKIISVAKFGIGMASVAEINSYNILQATKLSMERALVNLGIELDYVLVDGNQPPKVKWQVKSIVKGDSLSVSVAAASIVAKVARDQLMQELHNQYPEYNWYKNKGYGTKGHIDAINLYGVTEHHRKSFAPILNSTKRALL</sequence>
<organism>
    <name type="scientific">Wolbachia sp. subsp. Brugia malayi (strain TRS)</name>
    <dbReference type="NCBI Taxonomy" id="292805"/>
    <lineage>
        <taxon>Bacteria</taxon>
        <taxon>Pseudomonadati</taxon>
        <taxon>Pseudomonadota</taxon>
        <taxon>Alphaproteobacteria</taxon>
        <taxon>Rickettsiales</taxon>
        <taxon>Anaplasmataceae</taxon>
        <taxon>Wolbachieae</taxon>
        <taxon>Wolbachia</taxon>
    </lineage>
</organism>
<comment type="function">
    <text evidence="1">Endonuclease that specifically degrades the RNA of RNA-DNA hybrids.</text>
</comment>
<comment type="catalytic activity">
    <reaction evidence="1">
        <text>Endonucleolytic cleavage to 5'-phosphomonoester.</text>
        <dbReference type="EC" id="3.1.26.4"/>
    </reaction>
</comment>
<comment type="cofactor">
    <cofactor evidence="1">
        <name>Mn(2+)</name>
        <dbReference type="ChEBI" id="CHEBI:29035"/>
    </cofactor>
    <cofactor evidence="1">
        <name>Mg(2+)</name>
        <dbReference type="ChEBI" id="CHEBI:18420"/>
    </cofactor>
    <text evidence="1">Manganese or magnesium. Binds 1 divalent metal ion per monomer in the absence of substrate. May bind a second metal ion after substrate binding.</text>
</comment>
<comment type="subcellular location">
    <subcellularLocation>
        <location evidence="1">Cytoplasm</location>
    </subcellularLocation>
</comment>
<comment type="similarity">
    <text evidence="1">Belongs to the RNase HII family.</text>
</comment>
<name>RNH2_WOLTR</name>
<gene>
    <name evidence="1" type="primary">rnhB</name>
    <name type="ordered locus">Wbm0642</name>
</gene>
<reference key="1">
    <citation type="journal article" date="2005" name="PLoS Biol.">
        <title>The Wolbachia genome of Brugia malayi: endosymbiont evolution within a human pathogenic nematode.</title>
        <authorList>
            <person name="Foster J."/>
            <person name="Ganatra M."/>
            <person name="Kamal I."/>
            <person name="Ware J."/>
            <person name="Makarova K."/>
            <person name="Ivanova N."/>
            <person name="Bhattacharyya A."/>
            <person name="Kapatral V."/>
            <person name="Kumar S."/>
            <person name="Posfai J."/>
            <person name="Vincze T."/>
            <person name="Ingram J."/>
            <person name="Moran L."/>
            <person name="Lapidus A."/>
            <person name="Omelchenko M."/>
            <person name="Kyrpides N."/>
            <person name="Ghedin E."/>
            <person name="Wang S."/>
            <person name="Goltsman E."/>
            <person name="Joukov V."/>
            <person name="Ostrovskaya O."/>
            <person name="Tsukerman K."/>
            <person name="Mazur M."/>
            <person name="Comb D."/>
            <person name="Koonin E."/>
            <person name="Slatko B."/>
        </authorList>
    </citation>
    <scope>NUCLEOTIDE SEQUENCE [LARGE SCALE GENOMIC DNA]</scope>
    <source>
        <strain>TRS</strain>
    </source>
</reference>
<proteinExistence type="inferred from homology"/>
<evidence type="ECO:0000255" key="1">
    <source>
        <dbReference type="HAMAP-Rule" id="MF_00052"/>
    </source>
</evidence>
<evidence type="ECO:0000255" key="2">
    <source>
        <dbReference type="PROSITE-ProRule" id="PRU01319"/>
    </source>
</evidence>
<protein>
    <recommendedName>
        <fullName evidence="1">Ribonuclease HII</fullName>
        <shortName evidence="1">RNase HII</shortName>
        <ecNumber evidence="1">3.1.26.4</ecNumber>
    </recommendedName>
</protein>
<dbReference type="EC" id="3.1.26.4" evidence="1"/>
<dbReference type="EMBL" id="AE017321">
    <property type="protein sequence ID" value="AAW71230.1"/>
    <property type="molecule type" value="Genomic_DNA"/>
</dbReference>
<dbReference type="RefSeq" id="WP_011256840.1">
    <property type="nucleotide sequence ID" value="NC_006833.1"/>
</dbReference>
<dbReference type="SMR" id="Q5GRZ4"/>
<dbReference type="STRING" id="292805.Wbm0642"/>
<dbReference type="KEGG" id="wbm:Wbm0642"/>
<dbReference type="eggNOG" id="COG0164">
    <property type="taxonomic scope" value="Bacteria"/>
</dbReference>
<dbReference type="HOGENOM" id="CLU_036532_3_2_5"/>
<dbReference type="Proteomes" id="UP000000534">
    <property type="component" value="Chromosome"/>
</dbReference>
<dbReference type="GO" id="GO:0005737">
    <property type="term" value="C:cytoplasm"/>
    <property type="evidence" value="ECO:0007669"/>
    <property type="project" value="UniProtKB-SubCell"/>
</dbReference>
<dbReference type="GO" id="GO:0032299">
    <property type="term" value="C:ribonuclease H2 complex"/>
    <property type="evidence" value="ECO:0007669"/>
    <property type="project" value="TreeGrafter"/>
</dbReference>
<dbReference type="GO" id="GO:0030145">
    <property type="term" value="F:manganese ion binding"/>
    <property type="evidence" value="ECO:0007669"/>
    <property type="project" value="UniProtKB-UniRule"/>
</dbReference>
<dbReference type="GO" id="GO:0003723">
    <property type="term" value="F:RNA binding"/>
    <property type="evidence" value="ECO:0007669"/>
    <property type="project" value="InterPro"/>
</dbReference>
<dbReference type="GO" id="GO:0004523">
    <property type="term" value="F:RNA-DNA hybrid ribonuclease activity"/>
    <property type="evidence" value="ECO:0007669"/>
    <property type="project" value="UniProtKB-UniRule"/>
</dbReference>
<dbReference type="GO" id="GO:0043137">
    <property type="term" value="P:DNA replication, removal of RNA primer"/>
    <property type="evidence" value="ECO:0007669"/>
    <property type="project" value="TreeGrafter"/>
</dbReference>
<dbReference type="GO" id="GO:0006298">
    <property type="term" value="P:mismatch repair"/>
    <property type="evidence" value="ECO:0007669"/>
    <property type="project" value="TreeGrafter"/>
</dbReference>
<dbReference type="CDD" id="cd07182">
    <property type="entry name" value="RNase_HII_bacteria_HII_like"/>
    <property type="match status" value="1"/>
</dbReference>
<dbReference type="FunFam" id="3.30.420.10:FF:000006">
    <property type="entry name" value="Ribonuclease HII"/>
    <property type="match status" value="1"/>
</dbReference>
<dbReference type="Gene3D" id="3.30.420.10">
    <property type="entry name" value="Ribonuclease H-like superfamily/Ribonuclease H"/>
    <property type="match status" value="1"/>
</dbReference>
<dbReference type="HAMAP" id="MF_00052_B">
    <property type="entry name" value="RNase_HII_B"/>
    <property type="match status" value="1"/>
</dbReference>
<dbReference type="InterPro" id="IPR022898">
    <property type="entry name" value="RNase_HII"/>
</dbReference>
<dbReference type="InterPro" id="IPR001352">
    <property type="entry name" value="RNase_HII/HIII"/>
</dbReference>
<dbReference type="InterPro" id="IPR024567">
    <property type="entry name" value="RNase_HII/HIII_dom"/>
</dbReference>
<dbReference type="InterPro" id="IPR012337">
    <property type="entry name" value="RNaseH-like_sf"/>
</dbReference>
<dbReference type="InterPro" id="IPR036397">
    <property type="entry name" value="RNaseH_sf"/>
</dbReference>
<dbReference type="NCBIfam" id="NF000594">
    <property type="entry name" value="PRK00015.1-1"/>
    <property type="match status" value="1"/>
</dbReference>
<dbReference type="NCBIfam" id="NF000595">
    <property type="entry name" value="PRK00015.1-3"/>
    <property type="match status" value="1"/>
</dbReference>
<dbReference type="PANTHER" id="PTHR10954">
    <property type="entry name" value="RIBONUCLEASE H2 SUBUNIT A"/>
    <property type="match status" value="1"/>
</dbReference>
<dbReference type="PANTHER" id="PTHR10954:SF18">
    <property type="entry name" value="RIBONUCLEASE HII"/>
    <property type="match status" value="1"/>
</dbReference>
<dbReference type="Pfam" id="PF01351">
    <property type="entry name" value="RNase_HII"/>
    <property type="match status" value="1"/>
</dbReference>
<dbReference type="SUPFAM" id="SSF53098">
    <property type="entry name" value="Ribonuclease H-like"/>
    <property type="match status" value="1"/>
</dbReference>
<dbReference type="PROSITE" id="PS51975">
    <property type="entry name" value="RNASE_H_2"/>
    <property type="match status" value="1"/>
</dbReference>
<feature type="chain" id="PRO_0000111653" description="Ribonuclease HII">
    <location>
        <begin position="1"/>
        <end position="203"/>
    </location>
</feature>
<feature type="domain" description="RNase H type-2" evidence="2">
    <location>
        <begin position="14"/>
        <end position="203"/>
    </location>
</feature>
<feature type="binding site" evidence="1">
    <location>
        <position position="20"/>
    </location>
    <ligand>
        <name>a divalent metal cation</name>
        <dbReference type="ChEBI" id="CHEBI:60240"/>
    </ligand>
</feature>
<feature type="binding site" evidence="1">
    <location>
        <position position="21"/>
    </location>
    <ligand>
        <name>a divalent metal cation</name>
        <dbReference type="ChEBI" id="CHEBI:60240"/>
    </ligand>
</feature>
<feature type="binding site" evidence="1">
    <location>
        <position position="112"/>
    </location>
    <ligand>
        <name>a divalent metal cation</name>
        <dbReference type="ChEBI" id="CHEBI:60240"/>
    </ligand>
</feature>
<keyword id="KW-0963">Cytoplasm</keyword>
<keyword id="KW-0255">Endonuclease</keyword>
<keyword id="KW-0378">Hydrolase</keyword>
<keyword id="KW-0464">Manganese</keyword>
<keyword id="KW-0479">Metal-binding</keyword>
<keyword id="KW-0540">Nuclease</keyword>
<keyword id="KW-1185">Reference proteome</keyword>